<feature type="chain" id="PRO_0000240591" description="AP-1 complex subunit mu-2">
    <location>
        <begin position="1"/>
        <end position="423"/>
    </location>
</feature>
<feature type="domain" description="MHD" evidence="5">
    <location>
        <begin position="168"/>
        <end position="421"/>
    </location>
</feature>
<gene>
    <name evidence="3" type="primary">AP1M2</name>
</gene>
<evidence type="ECO:0000250" key="1"/>
<evidence type="ECO:0000250" key="2">
    <source>
        <dbReference type="UniProtKB" id="D3ZRP6"/>
    </source>
</evidence>
<evidence type="ECO:0000250" key="3">
    <source>
        <dbReference type="UniProtKB" id="Q9Y6Q5"/>
    </source>
</evidence>
<evidence type="ECO:0000255" key="4"/>
<evidence type="ECO:0000255" key="5">
    <source>
        <dbReference type="PROSITE-ProRule" id="PRU00404"/>
    </source>
</evidence>
<evidence type="ECO:0000269" key="6">
    <source>
    </source>
</evidence>
<evidence type="ECO:0000305" key="7"/>
<evidence type="ECO:0000312" key="8">
    <source>
        <dbReference type="EMBL" id="AAI03359.1"/>
    </source>
</evidence>
<organism>
    <name type="scientific">Bos taurus</name>
    <name type="common">Bovine</name>
    <dbReference type="NCBI Taxonomy" id="9913"/>
    <lineage>
        <taxon>Eukaryota</taxon>
        <taxon>Metazoa</taxon>
        <taxon>Chordata</taxon>
        <taxon>Craniata</taxon>
        <taxon>Vertebrata</taxon>
        <taxon>Euteleostomi</taxon>
        <taxon>Mammalia</taxon>
        <taxon>Eutheria</taxon>
        <taxon>Laurasiatheria</taxon>
        <taxon>Artiodactyla</taxon>
        <taxon>Ruminantia</taxon>
        <taxon>Pecora</taxon>
        <taxon>Bovidae</taxon>
        <taxon>Bovinae</taxon>
        <taxon>Bos</taxon>
    </lineage>
</organism>
<keyword id="KW-0968">Cytoplasmic vesicle</keyword>
<keyword id="KW-0333">Golgi apparatus</keyword>
<keyword id="KW-0472">Membrane</keyword>
<keyword id="KW-0597">Phosphoprotein</keyword>
<keyword id="KW-0653">Protein transport</keyword>
<keyword id="KW-1185">Reference proteome</keyword>
<keyword id="KW-0813">Transport</keyword>
<name>AP1M2_BOVIN</name>
<comment type="function">
    <text evidence="3 6">Subunit of clathrin-associated adaptor protein complex 1 that plays a role in protein sorting in the trans-Golgi network (TGN) and endosomes. The AP complexes mediate the recruitment of clathrin to membranes and the recognition of sorting signals within the cytosolic tails of transmembrane cargo molecules.</text>
</comment>
<comment type="subunit">
    <text evidence="2">Adaptor protein complex 1 (AP-1) is a heterotetramer composed of two large adaptins (gamma-type subunit AP1G1 and beta-type subunit AP1B1), a medium adaptin (mu-type subunit AP1M1 or AP1M2) and a small adaptin (sigma-type subunit AP1S1 or AP1S2 or AP1S3). Interacts with P2X4 (By similarity).</text>
</comment>
<comment type="subcellular location">
    <subcellularLocation>
        <location evidence="1">Cytoplasmic vesicle</location>
        <location evidence="1">Clathrin-coated vesicle membrane</location>
        <topology evidence="1">Peripheral membrane protein</topology>
        <orientation evidence="1">Cytoplasmic side</orientation>
    </subcellularLocation>
    <subcellularLocation>
        <location evidence="1">Golgi apparatus</location>
    </subcellularLocation>
    <text evidence="1">Component of the coat surrounding the cytoplasmic face of coated vesicles located at the Golgi complex.</text>
</comment>
<comment type="PTM">
    <text evidence="6">Phosphorylation of membrane-bound AP1M1/AP1M2 increases its affinity for sorting signals.</text>
</comment>
<comment type="similarity">
    <text evidence="4">Belongs to the adaptor complexes medium subunit family.</text>
</comment>
<sequence>MSASAVFILDVKGKPLISRNYKGDVAMSEIDHFMPLLMQREEEGALTPLLSHGRVHFLWIKYSNLYLVATTLKNANASLVYSFLYKIVEVFSEYFKELEEESIRDNFVIVYELLDELMDFGFPQTTDSKILQEYITQQGNKLETGKSRVPPTVTNAVSWRSEGIKYKKNEVFIDVIESVNLLVNANGSVLLSEIVGSIKLKVFLSGMPELRLGLNDRVLFELTGRSKNKSVELEDVKFHQCVRLSRFDNDRTISFIPPDGDFELMSYRLSTQVKPLIWIESVIEKFSHSRVEIMVKAKGQFKKQSVANGVEISVPVPSDADSPRFKTSVGSAKYVPEKNTVIWSIKSFPGGKEYLMRAHFGLPSVEKEEVEGRPPIGVKFEIPYFTVSGIQVRYMKIIEKSGYQALPWVRYITQSGDYQLRTS</sequence>
<dbReference type="EMBL" id="BC103358">
    <property type="protein sequence ID" value="AAI03359.1"/>
    <property type="molecule type" value="mRNA"/>
</dbReference>
<dbReference type="RefSeq" id="NP_001029683.1">
    <property type="nucleotide sequence ID" value="NM_001034511.1"/>
</dbReference>
<dbReference type="SMR" id="Q3SYW1"/>
<dbReference type="FunCoup" id="Q3SYW1">
    <property type="interactions" value="685"/>
</dbReference>
<dbReference type="STRING" id="9913.ENSBTAP00000072922"/>
<dbReference type="PaxDb" id="9913-ENSBTAP00000043007"/>
<dbReference type="PeptideAtlas" id="Q3SYW1"/>
<dbReference type="GeneID" id="515766"/>
<dbReference type="KEGG" id="bta:515766"/>
<dbReference type="CTD" id="10053"/>
<dbReference type="VEuPathDB" id="HostDB:ENSBTAG00000021160"/>
<dbReference type="eggNOG" id="KOG0937">
    <property type="taxonomic scope" value="Eukaryota"/>
</dbReference>
<dbReference type="HOGENOM" id="CLU_026996_0_0_1"/>
<dbReference type="InParanoid" id="Q3SYW1"/>
<dbReference type="OMA" id="HSRLEIM"/>
<dbReference type="OrthoDB" id="10259133at2759"/>
<dbReference type="TreeFam" id="TF300393"/>
<dbReference type="Reactome" id="R-BTA-2132295">
    <property type="pathway name" value="MHC class II antigen presentation"/>
</dbReference>
<dbReference type="Reactome" id="R-BTA-432720">
    <property type="pathway name" value="Lysosome Vesicle Biogenesis"/>
</dbReference>
<dbReference type="Reactome" id="R-BTA-432722">
    <property type="pathway name" value="Golgi Associated Vesicle Biogenesis"/>
</dbReference>
<dbReference type="Proteomes" id="UP000009136">
    <property type="component" value="Chromosome 7"/>
</dbReference>
<dbReference type="Bgee" id="ENSBTAG00000021160">
    <property type="expression patterns" value="Expressed in corpus epididymis and 77 other cell types or tissues"/>
</dbReference>
<dbReference type="GO" id="GO:0030131">
    <property type="term" value="C:clathrin adaptor complex"/>
    <property type="evidence" value="ECO:0007669"/>
    <property type="project" value="InterPro"/>
</dbReference>
<dbReference type="GO" id="GO:0030136">
    <property type="term" value="C:clathrin-coated vesicle"/>
    <property type="evidence" value="ECO:0000318"/>
    <property type="project" value="GO_Central"/>
</dbReference>
<dbReference type="GO" id="GO:0030665">
    <property type="term" value="C:clathrin-coated vesicle membrane"/>
    <property type="evidence" value="ECO:0007669"/>
    <property type="project" value="UniProtKB-SubCell"/>
</dbReference>
<dbReference type="GO" id="GO:0005794">
    <property type="term" value="C:Golgi apparatus"/>
    <property type="evidence" value="ECO:0007669"/>
    <property type="project" value="UniProtKB-SubCell"/>
</dbReference>
<dbReference type="GO" id="GO:0035615">
    <property type="term" value="F:clathrin adaptor activity"/>
    <property type="evidence" value="ECO:0000318"/>
    <property type="project" value="GO_Central"/>
</dbReference>
<dbReference type="GO" id="GO:0006886">
    <property type="term" value="P:intracellular protein transport"/>
    <property type="evidence" value="ECO:0007669"/>
    <property type="project" value="InterPro"/>
</dbReference>
<dbReference type="GO" id="GO:0016192">
    <property type="term" value="P:vesicle-mediated transport"/>
    <property type="evidence" value="ECO:0000318"/>
    <property type="project" value="GO_Central"/>
</dbReference>
<dbReference type="CDD" id="cd14835">
    <property type="entry name" value="AP1_Mu_N"/>
    <property type="match status" value="1"/>
</dbReference>
<dbReference type="FunFam" id="2.60.40.1170:FF:000002">
    <property type="entry name" value="AP-1 complex subunit mu-1 isoform 1"/>
    <property type="match status" value="1"/>
</dbReference>
<dbReference type="FunFam" id="3.30.450.60:FF:000006">
    <property type="entry name" value="AP-1 complex subunit mu-1 isoform 1"/>
    <property type="match status" value="1"/>
</dbReference>
<dbReference type="FunFam" id="2.60.40.1170:FF:000046">
    <property type="entry name" value="AP-1 complex subunit mu-2"/>
    <property type="match status" value="1"/>
</dbReference>
<dbReference type="Gene3D" id="3.30.450.60">
    <property type="match status" value="1"/>
</dbReference>
<dbReference type="Gene3D" id="2.60.40.1170">
    <property type="entry name" value="Mu homology domain, subdomain B"/>
    <property type="match status" value="2"/>
</dbReference>
<dbReference type="InterPro" id="IPR050431">
    <property type="entry name" value="Adaptor_comp_med_subunit"/>
</dbReference>
<dbReference type="InterPro" id="IPR036168">
    <property type="entry name" value="AP2_Mu_C_sf"/>
</dbReference>
<dbReference type="InterPro" id="IPR022775">
    <property type="entry name" value="AP_mu_sigma_su"/>
</dbReference>
<dbReference type="InterPro" id="IPR001392">
    <property type="entry name" value="Clathrin_mu"/>
</dbReference>
<dbReference type="InterPro" id="IPR018240">
    <property type="entry name" value="Clathrin_mu_CS"/>
</dbReference>
<dbReference type="InterPro" id="IPR011012">
    <property type="entry name" value="Longin-like_dom_sf"/>
</dbReference>
<dbReference type="InterPro" id="IPR028565">
    <property type="entry name" value="MHD"/>
</dbReference>
<dbReference type="PANTHER" id="PTHR10529">
    <property type="entry name" value="AP COMPLEX SUBUNIT MU"/>
    <property type="match status" value="1"/>
</dbReference>
<dbReference type="Pfam" id="PF00928">
    <property type="entry name" value="Adap_comp_sub"/>
    <property type="match status" value="1"/>
</dbReference>
<dbReference type="Pfam" id="PF01217">
    <property type="entry name" value="Clat_adaptor_s"/>
    <property type="match status" value="1"/>
</dbReference>
<dbReference type="PIRSF" id="PIRSF005992">
    <property type="entry name" value="Clathrin_mu"/>
    <property type="match status" value="1"/>
</dbReference>
<dbReference type="PRINTS" id="PR00314">
    <property type="entry name" value="CLATHRINADPT"/>
</dbReference>
<dbReference type="SUPFAM" id="SSF49447">
    <property type="entry name" value="Second domain of Mu2 adaptin subunit (ap50) of ap2 adaptor"/>
    <property type="match status" value="1"/>
</dbReference>
<dbReference type="SUPFAM" id="SSF64356">
    <property type="entry name" value="SNARE-like"/>
    <property type="match status" value="1"/>
</dbReference>
<dbReference type="PROSITE" id="PS00990">
    <property type="entry name" value="CLAT_ADAPTOR_M_1"/>
    <property type="match status" value="1"/>
</dbReference>
<dbReference type="PROSITE" id="PS00991">
    <property type="entry name" value="CLAT_ADAPTOR_M_2"/>
    <property type="match status" value="1"/>
</dbReference>
<dbReference type="PROSITE" id="PS51072">
    <property type="entry name" value="MHD"/>
    <property type="match status" value="1"/>
</dbReference>
<accession>Q3SYW1</accession>
<protein>
    <recommendedName>
        <fullName>AP-1 complex subunit mu-2</fullName>
    </recommendedName>
    <alternativeName>
        <fullName>AP-mu chain family member mu1B</fullName>
    </alternativeName>
    <alternativeName>
        <fullName>Adaptor protein complex AP-1 subunit mu-2</fullName>
    </alternativeName>
    <alternativeName>
        <fullName>Adaptor-related protein complex 1 subunit mu-2</fullName>
    </alternativeName>
    <alternativeName>
        <fullName>Clathrin assembly protein complex 1 mu-2 medium chain 2</fullName>
    </alternativeName>
    <alternativeName>
        <fullName>Golgi adaptor HA1/AP1 adaptin mu-2 subunit</fullName>
    </alternativeName>
    <alternativeName>
        <fullName>Mu-adaptin 2</fullName>
    </alternativeName>
    <alternativeName>
        <fullName>Mu1B-adaptin</fullName>
    </alternativeName>
</protein>
<reference evidence="8" key="1">
    <citation type="submission" date="2005-08" db="EMBL/GenBank/DDBJ databases">
        <authorList>
            <consortium name="NIH - Mammalian Gene Collection (MGC) project"/>
        </authorList>
    </citation>
    <scope>NUCLEOTIDE SEQUENCE [LARGE SCALE MRNA]</scope>
    <source>
        <strain evidence="8">Crossbred X Angus</strain>
        <tissue evidence="8">Ileum</tissue>
    </source>
</reference>
<reference evidence="7" key="2">
    <citation type="journal article" date="2003" name="J. Cell Biol.">
        <title>AP-1 binding to sorting signals and release from clathrin-coated vesicles is regulated by phosphorylation.</title>
        <authorList>
            <person name="Ghosh P."/>
            <person name="Kornfeld S."/>
        </authorList>
    </citation>
    <scope>FUNCTION</scope>
    <scope>PHOSPHORYLATION</scope>
</reference>
<proteinExistence type="evidence at protein level"/>